<organism>
    <name type="scientific">Bartonella henselae (strain ATCC 49882 / DSM 28221 / CCUG 30454 / Houston 1)</name>
    <name type="common">Rochalimaea henselae</name>
    <dbReference type="NCBI Taxonomy" id="283166"/>
    <lineage>
        <taxon>Bacteria</taxon>
        <taxon>Pseudomonadati</taxon>
        <taxon>Pseudomonadota</taxon>
        <taxon>Alphaproteobacteria</taxon>
        <taxon>Hyphomicrobiales</taxon>
        <taxon>Bartonellaceae</taxon>
        <taxon>Bartonella</taxon>
    </lineage>
</organism>
<dbReference type="EMBL" id="BX897699">
    <property type="protein sequence ID" value="CAF28268.1"/>
    <property type="molecule type" value="Genomic_DNA"/>
</dbReference>
<dbReference type="RefSeq" id="WP_011181273.1">
    <property type="nucleotide sequence ID" value="NZ_LRIJ02000001.1"/>
</dbReference>
<dbReference type="SMR" id="Q6G1Z4"/>
<dbReference type="PaxDb" id="283166-BH15050"/>
<dbReference type="EnsemblBacteria" id="CAF28268">
    <property type="protein sequence ID" value="CAF28268"/>
    <property type="gene ID" value="BH15050"/>
</dbReference>
<dbReference type="GeneID" id="92986117"/>
<dbReference type="KEGG" id="bhe:BH15050"/>
<dbReference type="eggNOG" id="COG0254">
    <property type="taxonomic scope" value="Bacteria"/>
</dbReference>
<dbReference type="OrthoDB" id="9803251at2"/>
<dbReference type="Proteomes" id="UP000000421">
    <property type="component" value="Chromosome"/>
</dbReference>
<dbReference type="GO" id="GO:1990904">
    <property type="term" value="C:ribonucleoprotein complex"/>
    <property type="evidence" value="ECO:0007669"/>
    <property type="project" value="UniProtKB-KW"/>
</dbReference>
<dbReference type="GO" id="GO:0005840">
    <property type="term" value="C:ribosome"/>
    <property type="evidence" value="ECO:0007669"/>
    <property type="project" value="UniProtKB-KW"/>
</dbReference>
<dbReference type="GO" id="GO:0019843">
    <property type="term" value="F:rRNA binding"/>
    <property type="evidence" value="ECO:0007669"/>
    <property type="project" value="UniProtKB-KW"/>
</dbReference>
<dbReference type="GO" id="GO:0003735">
    <property type="term" value="F:structural constituent of ribosome"/>
    <property type="evidence" value="ECO:0007669"/>
    <property type="project" value="InterPro"/>
</dbReference>
<dbReference type="GO" id="GO:0006412">
    <property type="term" value="P:translation"/>
    <property type="evidence" value="ECO:0007669"/>
    <property type="project" value="UniProtKB-UniRule"/>
</dbReference>
<dbReference type="Gene3D" id="4.10.830.30">
    <property type="entry name" value="Ribosomal protein L31"/>
    <property type="match status" value="1"/>
</dbReference>
<dbReference type="HAMAP" id="MF_00501">
    <property type="entry name" value="Ribosomal_bL31_1"/>
    <property type="match status" value="1"/>
</dbReference>
<dbReference type="InterPro" id="IPR034704">
    <property type="entry name" value="Ribosomal_bL28/bL31-like_sf"/>
</dbReference>
<dbReference type="InterPro" id="IPR002150">
    <property type="entry name" value="Ribosomal_bL31"/>
</dbReference>
<dbReference type="InterPro" id="IPR027491">
    <property type="entry name" value="Ribosomal_bL31_A"/>
</dbReference>
<dbReference type="InterPro" id="IPR042105">
    <property type="entry name" value="Ribosomal_bL31_sf"/>
</dbReference>
<dbReference type="NCBIfam" id="TIGR00105">
    <property type="entry name" value="L31"/>
    <property type="match status" value="1"/>
</dbReference>
<dbReference type="NCBIfam" id="NF001809">
    <property type="entry name" value="PRK00528.1"/>
    <property type="match status" value="1"/>
</dbReference>
<dbReference type="PANTHER" id="PTHR33280">
    <property type="entry name" value="50S RIBOSOMAL PROTEIN L31, CHLOROPLASTIC"/>
    <property type="match status" value="1"/>
</dbReference>
<dbReference type="PANTHER" id="PTHR33280:SF6">
    <property type="entry name" value="LARGE RIBOSOMAL SUBUNIT PROTEIN BL31A"/>
    <property type="match status" value="1"/>
</dbReference>
<dbReference type="Pfam" id="PF01197">
    <property type="entry name" value="Ribosomal_L31"/>
    <property type="match status" value="1"/>
</dbReference>
<dbReference type="PRINTS" id="PR01249">
    <property type="entry name" value="RIBOSOMALL31"/>
</dbReference>
<dbReference type="SUPFAM" id="SSF143800">
    <property type="entry name" value="L28p-like"/>
    <property type="match status" value="1"/>
</dbReference>
<dbReference type="PROSITE" id="PS01143">
    <property type="entry name" value="RIBOSOMAL_L31"/>
    <property type="match status" value="1"/>
</dbReference>
<sequence>MKANIHPDYHKITVVMTDGSQYTTRSTWGKEGDVLNLDIDPRTHPAWTGGSQTLVDHGGRISKFKNRFGNLGM</sequence>
<gene>
    <name evidence="1" type="primary">rpmE</name>
    <name type="ordered locus">BH15050</name>
</gene>
<feature type="chain" id="PRO_0000173080" description="Large ribosomal subunit protein bL31">
    <location>
        <begin position="1"/>
        <end position="73"/>
    </location>
</feature>
<reference key="1">
    <citation type="journal article" date="2004" name="Proc. Natl. Acad. Sci. U.S.A.">
        <title>The louse-borne human pathogen Bartonella quintana is a genomic derivative of the zoonotic agent Bartonella henselae.</title>
        <authorList>
            <person name="Alsmark U.C.M."/>
            <person name="Frank A.C."/>
            <person name="Karlberg E.O."/>
            <person name="Legault B.-A."/>
            <person name="Ardell D.H."/>
            <person name="Canbaeck B."/>
            <person name="Eriksson A.-S."/>
            <person name="Naeslund A.K."/>
            <person name="Handley S.A."/>
            <person name="Huvet M."/>
            <person name="La Scola B."/>
            <person name="Holmberg M."/>
            <person name="Andersson S.G.E."/>
        </authorList>
    </citation>
    <scope>NUCLEOTIDE SEQUENCE [LARGE SCALE GENOMIC DNA]</scope>
    <source>
        <strain>ATCC 49882 / DSM 28221 / CCUG 30454 / Houston 1</strain>
    </source>
</reference>
<accession>Q6G1Z4</accession>
<name>RL31_BARHE</name>
<proteinExistence type="inferred from homology"/>
<evidence type="ECO:0000255" key="1">
    <source>
        <dbReference type="HAMAP-Rule" id="MF_00501"/>
    </source>
</evidence>
<evidence type="ECO:0000305" key="2"/>
<keyword id="KW-0687">Ribonucleoprotein</keyword>
<keyword id="KW-0689">Ribosomal protein</keyword>
<keyword id="KW-0694">RNA-binding</keyword>
<keyword id="KW-0699">rRNA-binding</keyword>
<protein>
    <recommendedName>
        <fullName evidence="1">Large ribosomal subunit protein bL31</fullName>
    </recommendedName>
    <alternativeName>
        <fullName evidence="2">50S ribosomal protein L31</fullName>
    </alternativeName>
</protein>
<comment type="function">
    <text evidence="1">Binds the 23S rRNA.</text>
</comment>
<comment type="subunit">
    <text evidence="1">Part of the 50S ribosomal subunit.</text>
</comment>
<comment type="similarity">
    <text evidence="1">Belongs to the bacterial ribosomal protein bL31 family. Type A subfamily.</text>
</comment>